<keyword id="KW-0030">Aminoacyl-tRNA synthetase</keyword>
<keyword id="KW-0067">ATP-binding</keyword>
<keyword id="KW-0963">Cytoplasm</keyword>
<keyword id="KW-0436">Ligase</keyword>
<keyword id="KW-0547">Nucleotide-binding</keyword>
<keyword id="KW-0648">Protein biosynthesis</keyword>
<keyword id="KW-1185">Reference proteome</keyword>
<comment type="catalytic activity">
    <reaction evidence="1">
        <text>tRNA(His) + L-histidine + ATP = L-histidyl-tRNA(His) + AMP + diphosphate + H(+)</text>
        <dbReference type="Rhea" id="RHEA:17313"/>
        <dbReference type="Rhea" id="RHEA-COMP:9665"/>
        <dbReference type="Rhea" id="RHEA-COMP:9689"/>
        <dbReference type="ChEBI" id="CHEBI:15378"/>
        <dbReference type="ChEBI" id="CHEBI:30616"/>
        <dbReference type="ChEBI" id="CHEBI:33019"/>
        <dbReference type="ChEBI" id="CHEBI:57595"/>
        <dbReference type="ChEBI" id="CHEBI:78442"/>
        <dbReference type="ChEBI" id="CHEBI:78527"/>
        <dbReference type="ChEBI" id="CHEBI:456215"/>
        <dbReference type="EC" id="6.1.1.21"/>
    </reaction>
</comment>
<comment type="subunit">
    <text evidence="1">Homodimer.</text>
</comment>
<comment type="subcellular location">
    <subcellularLocation>
        <location evidence="1">Cytoplasm</location>
    </subcellularLocation>
</comment>
<comment type="similarity">
    <text evidence="1">Belongs to the class-II aminoacyl-tRNA synthetase family.</text>
</comment>
<reference key="1">
    <citation type="journal article" date="2000" name="Nucleic Acids Res.">
        <title>Complete genome sequence of the alkaliphilic bacterium Bacillus halodurans and genomic sequence comparison with Bacillus subtilis.</title>
        <authorList>
            <person name="Takami H."/>
            <person name="Nakasone K."/>
            <person name="Takaki Y."/>
            <person name="Maeno G."/>
            <person name="Sasaki R."/>
            <person name="Masui N."/>
            <person name="Fuji F."/>
            <person name="Hirama C."/>
            <person name="Nakamura Y."/>
            <person name="Ogasawara N."/>
            <person name="Kuhara S."/>
            <person name="Horikoshi K."/>
        </authorList>
    </citation>
    <scope>NUCLEOTIDE SEQUENCE [LARGE SCALE GENOMIC DNA]</scope>
    <source>
        <strain>ATCC BAA-125 / DSM 18197 / FERM 7344 / JCM 9153 / C-125</strain>
    </source>
</reference>
<protein>
    <recommendedName>
        <fullName evidence="1">Histidine--tRNA ligase</fullName>
        <ecNumber evidence="1">6.1.1.21</ecNumber>
    </recommendedName>
    <alternativeName>
        <fullName evidence="1">Histidyl-tRNA synthetase</fullName>
        <shortName evidence="1">HisRS</shortName>
    </alternativeName>
</protein>
<sequence>MAIQIPRGTQDILPGDVETWQWIEQKAYDLCRRYNYQEIRVPMFEHTELFLRGVGDTTDIVQKEMYTFEDRGGRSLTLRPEGTASVTRAYVSNKLYGQANQPTKLFYIGPMFRYERPQSGRMRQFVQFGVEALGSADPAIDAEVLALVMRFYEELGLKNLKLVINSLGDTDSRLAHREALVNHFKPRIHEFCNDCQDRLEKNPLRILDCKKDRDHELMGTAPSIHDYLSTESKAYFEKVQSYLTALNIPFVVDATLVRGLDYYNHTAFEVMVDGEGFGAITTLCGGGRYNGLVEEIGGPETPGIGFALSIERAIMALEAQQAKPAHNQAIDCYVVTLGEAAKDKGVELVYQLRNAGISAEKDYLDRKMKGQLKAADRLHAKWTVILGEDELAVGKVNVKNMETGEQTDVALTDLVSHMKQQVEGGNES</sequence>
<gene>
    <name evidence="1" type="primary">hisS</name>
    <name type="ordered locus">BH1251</name>
</gene>
<accession>Q9KDG2</accession>
<name>SYH_HALH5</name>
<evidence type="ECO:0000255" key="1">
    <source>
        <dbReference type="HAMAP-Rule" id="MF_00127"/>
    </source>
</evidence>
<feature type="chain" id="PRO_0000136103" description="Histidine--tRNA ligase">
    <location>
        <begin position="1"/>
        <end position="428"/>
    </location>
</feature>
<proteinExistence type="inferred from homology"/>
<organism>
    <name type="scientific">Halalkalibacterium halodurans (strain ATCC BAA-125 / DSM 18197 / FERM 7344 / JCM 9153 / C-125)</name>
    <name type="common">Bacillus halodurans</name>
    <dbReference type="NCBI Taxonomy" id="272558"/>
    <lineage>
        <taxon>Bacteria</taxon>
        <taxon>Bacillati</taxon>
        <taxon>Bacillota</taxon>
        <taxon>Bacilli</taxon>
        <taxon>Bacillales</taxon>
        <taxon>Bacillaceae</taxon>
        <taxon>Halalkalibacterium (ex Joshi et al. 2022)</taxon>
    </lineage>
</organism>
<dbReference type="EC" id="6.1.1.21" evidence="1"/>
<dbReference type="EMBL" id="BA000004">
    <property type="protein sequence ID" value="BAB04970.1"/>
    <property type="molecule type" value="Genomic_DNA"/>
</dbReference>
<dbReference type="PIR" id="C83806">
    <property type="entry name" value="C83806"/>
</dbReference>
<dbReference type="RefSeq" id="WP_010897419.1">
    <property type="nucleotide sequence ID" value="NC_002570.2"/>
</dbReference>
<dbReference type="SMR" id="Q9KDG2"/>
<dbReference type="STRING" id="272558.gene:10727145"/>
<dbReference type="KEGG" id="bha:BH1251"/>
<dbReference type="eggNOG" id="COG0124">
    <property type="taxonomic scope" value="Bacteria"/>
</dbReference>
<dbReference type="HOGENOM" id="CLU_025113_1_1_9"/>
<dbReference type="OrthoDB" id="9800814at2"/>
<dbReference type="Proteomes" id="UP000001258">
    <property type="component" value="Chromosome"/>
</dbReference>
<dbReference type="GO" id="GO:0005737">
    <property type="term" value="C:cytoplasm"/>
    <property type="evidence" value="ECO:0007669"/>
    <property type="project" value="UniProtKB-SubCell"/>
</dbReference>
<dbReference type="GO" id="GO:0005524">
    <property type="term" value="F:ATP binding"/>
    <property type="evidence" value="ECO:0007669"/>
    <property type="project" value="UniProtKB-UniRule"/>
</dbReference>
<dbReference type="GO" id="GO:0140096">
    <property type="term" value="F:catalytic activity, acting on a protein"/>
    <property type="evidence" value="ECO:0007669"/>
    <property type="project" value="UniProtKB-ARBA"/>
</dbReference>
<dbReference type="GO" id="GO:0004821">
    <property type="term" value="F:histidine-tRNA ligase activity"/>
    <property type="evidence" value="ECO:0007669"/>
    <property type="project" value="UniProtKB-UniRule"/>
</dbReference>
<dbReference type="GO" id="GO:0016740">
    <property type="term" value="F:transferase activity"/>
    <property type="evidence" value="ECO:0007669"/>
    <property type="project" value="UniProtKB-ARBA"/>
</dbReference>
<dbReference type="GO" id="GO:0006427">
    <property type="term" value="P:histidyl-tRNA aminoacylation"/>
    <property type="evidence" value="ECO:0007669"/>
    <property type="project" value="UniProtKB-UniRule"/>
</dbReference>
<dbReference type="CDD" id="cd00773">
    <property type="entry name" value="HisRS-like_core"/>
    <property type="match status" value="1"/>
</dbReference>
<dbReference type="CDD" id="cd00859">
    <property type="entry name" value="HisRS_anticodon"/>
    <property type="match status" value="1"/>
</dbReference>
<dbReference type="FunFam" id="3.30.930.10:FF:000005">
    <property type="entry name" value="Histidine--tRNA ligase"/>
    <property type="match status" value="1"/>
</dbReference>
<dbReference type="Gene3D" id="3.40.50.800">
    <property type="entry name" value="Anticodon-binding domain"/>
    <property type="match status" value="1"/>
</dbReference>
<dbReference type="Gene3D" id="3.30.930.10">
    <property type="entry name" value="Bira Bifunctional Protein, Domain 2"/>
    <property type="match status" value="1"/>
</dbReference>
<dbReference type="HAMAP" id="MF_00127">
    <property type="entry name" value="His_tRNA_synth"/>
    <property type="match status" value="1"/>
</dbReference>
<dbReference type="InterPro" id="IPR006195">
    <property type="entry name" value="aa-tRNA-synth_II"/>
</dbReference>
<dbReference type="InterPro" id="IPR045864">
    <property type="entry name" value="aa-tRNA-synth_II/BPL/LPL"/>
</dbReference>
<dbReference type="InterPro" id="IPR004154">
    <property type="entry name" value="Anticodon-bd"/>
</dbReference>
<dbReference type="InterPro" id="IPR036621">
    <property type="entry name" value="Anticodon-bd_dom_sf"/>
</dbReference>
<dbReference type="InterPro" id="IPR015807">
    <property type="entry name" value="His-tRNA-ligase"/>
</dbReference>
<dbReference type="InterPro" id="IPR041715">
    <property type="entry name" value="HisRS-like_core"/>
</dbReference>
<dbReference type="InterPro" id="IPR004516">
    <property type="entry name" value="HisRS/HisZ"/>
</dbReference>
<dbReference type="InterPro" id="IPR033656">
    <property type="entry name" value="HisRS_anticodon"/>
</dbReference>
<dbReference type="NCBIfam" id="TIGR00442">
    <property type="entry name" value="hisS"/>
    <property type="match status" value="1"/>
</dbReference>
<dbReference type="PANTHER" id="PTHR43707:SF1">
    <property type="entry name" value="HISTIDINE--TRNA LIGASE, MITOCHONDRIAL-RELATED"/>
    <property type="match status" value="1"/>
</dbReference>
<dbReference type="PANTHER" id="PTHR43707">
    <property type="entry name" value="HISTIDYL-TRNA SYNTHETASE"/>
    <property type="match status" value="1"/>
</dbReference>
<dbReference type="Pfam" id="PF03129">
    <property type="entry name" value="HGTP_anticodon"/>
    <property type="match status" value="1"/>
</dbReference>
<dbReference type="Pfam" id="PF13393">
    <property type="entry name" value="tRNA-synt_His"/>
    <property type="match status" value="1"/>
</dbReference>
<dbReference type="PIRSF" id="PIRSF001549">
    <property type="entry name" value="His-tRNA_synth"/>
    <property type="match status" value="1"/>
</dbReference>
<dbReference type="SUPFAM" id="SSF52954">
    <property type="entry name" value="Class II aaRS ABD-related"/>
    <property type="match status" value="1"/>
</dbReference>
<dbReference type="SUPFAM" id="SSF55681">
    <property type="entry name" value="Class II aaRS and biotin synthetases"/>
    <property type="match status" value="1"/>
</dbReference>
<dbReference type="PROSITE" id="PS50862">
    <property type="entry name" value="AA_TRNA_LIGASE_II"/>
    <property type="match status" value="1"/>
</dbReference>